<dbReference type="EMBL" id="CP000826">
    <property type="protein sequence ID" value="ABV40350.1"/>
    <property type="molecule type" value="Genomic_DNA"/>
</dbReference>
<dbReference type="SMR" id="A8GB60"/>
<dbReference type="STRING" id="399741.Spro_1246"/>
<dbReference type="KEGG" id="spe:Spro_1246"/>
<dbReference type="eggNOG" id="COG2156">
    <property type="taxonomic scope" value="Bacteria"/>
</dbReference>
<dbReference type="HOGENOM" id="CLU_077094_2_0_6"/>
<dbReference type="OrthoDB" id="9788285at2"/>
<dbReference type="GO" id="GO:0005886">
    <property type="term" value="C:plasma membrane"/>
    <property type="evidence" value="ECO:0007669"/>
    <property type="project" value="UniProtKB-SubCell"/>
</dbReference>
<dbReference type="GO" id="GO:0005524">
    <property type="term" value="F:ATP binding"/>
    <property type="evidence" value="ECO:0007669"/>
    <property type="project" value="UniProtKB-UniRule"/>
</dbReference>
<dbReference type="GO" id="GO:0008556">
    <property type="term" value="F:P-type potassium transmembrane transporter activity"/>
    <property type="evidence" value="ECO:0007669"/>
    <property type="project" value="InterPro"/>
</dbReference>
<dbReference type="HAMAP" id="MF_00276">
    <property type="entry name" value="KdpC"/>
    <property type="match status" value="1"/>
</dbReference>
<dbReference type="InterPro" id="IPR003820">
    <property type="entry name" value="KdpC"/>
</dbReference>
<dbReference type="NCBIfam" id="TIGR00681">
    <property type="entry name" value="kdpC"/>
    <property type="match status" value="1"/>
</dbReference>
<dbReference type="NCBIfam" id="NF001454">
    <property type="entry name" value="PRK00315.1"/>
    <property type="match status" value="1"/>
</dbReference>
<dbReference type="PANTHER" id="PTHR30042">
    <property type="entry name" value="POTASSIUM-TRANSPORTING ATPASE C CHAIN"/>
    <property type="match status" value="1"/>
</dbReference>
<dbReference type="PANTHER" id="PTHR30042:SF2">
    <property type="entry name" value="POTASSIUM-TRANSPORTING ATPASE KDPC SUBUNIT"/>
    <property type="match status" value="1"/>
</dbReference>
<dbReference type="Pfam" id="PF02669">
    <property type="entry name" value="KdpC"/>
    <property type="match status" value="1"/>
</dbReference>
<dbReference type="PIRSF" id="PIRSF001296">
    <property type="entry name" value="K_ATPase_KdpC"/>
    <property type="match status" value="1"/>
</dbReference>
<reference key="1">
    <citation type="submission" date="2007-09" db="EMBL/GenBank/DDBJ databases">
        <title>Complete sequence of chromosome of Serratia proteamaculans 568.</title>
        <authorList>
            <consortium name="US DOE Joint Genome Institute"/>
            <person name="Copeland A."/>
            <person name="Lucas S."/>
            <person name="Lapidus A."/>
            <person name="Barry K."/>
            <person name="Glavina del Rio T."/>
            <person name="Dalin E."/>
            <person name="Tice H."/>
            <person name="Pitluck S."/>
            <person name="Chain P."/>
            <person name="Malfatti S."/>
            <person name="Shin M."/>
            <person name="Vergez L."/>
            <person name="Schmutz J."/>
            <person name="Larimer F."/>
            <person name="Land M."/>
            <person name="Hauser L."/>
            <person name="Kyrpides N."/>
            <person name="Kim E."/>
            <person name="Taghavi S."/>
            <person name="Newman L."/>
            <person name="Vangronsveld J."/>
            <person name="van der Lelie D."/>
            <person name="Richardson P."/>
        </authorList>
    </citation>
    <scope>NUCLEOTIDE SEQUENCE [LARGE SCALE GENOMIC DNA]</scope>
    <source>
        <strain>568</strain>
    </source>
</reference>
<protein>
    <recommendedName>
        <fullName evidence="1">Potassium-transporting ATPase KdpC subunit</fullName>
    </recommendedName>
    <alternativeName>
        <fullName evidence="1">ATP phosphohydrolase [potassium-transporting] C chain</fullName>
    </alternativeName>
    <alternativeName>
        <fullName evidence="1">Potassium-binding and translocating subunit C</fullName>
    </alternativeName>
    <alternativeName>
        <fullName evidence="1">Potassium-translocating ATPase C chain</fullName>
    </alternativeName>
</protein>
<name>KDPC_SERP5</name>
<keyword id="KW-0067">ATP-binding</keyword>
<keyword id="KW-0997">Cell inner membrane</keyword>
<keyword id="KW-1003">Cell membrane</keyword>
<keyword id="KW-0406">Ion transport</keyword>
<keyword id="KW-0472">Membrane</keyword>
<keyword id="KW-0547">Nucleotide-binding</keyword>
<keyword id="KW-0630">Potassium</keyword>
<keyword id="KW-0633">Potassium transport</keyword>
<keyword id="KW-0812">Transmembrane</keyword>
<keyword id="KW-1133">Transmembrane helix</keyword>
<keyword id="KW-0813">Transport</keyword>
<proteinExistence type="inferred from homology"/>
<feature type="chain" id="PRO_1000059219" description="Potassium-transporting ATPase KdpC subunit">
    <location>
        <begin position="1"/>
        <end position="189"/>
    </location>
</feature>
<feature type="transmembrane region" description="Helical" evidence="1">
    <location>
        <begin position="8"/>
        <end position="28"/>
    </location>
</feature>
<sequence>MSYLRPSLVMLILLTLITGIAYPLLTTGLSQLLFSGAANGSLLYQGDKVVGSALIGQNFTKPEYFWGRPSATADSAYNAMASAGSNLAATNPALDKAIAERAAQLRQANPAMKGPIPVDLLTASGSGLDPQISLAAAQYQLARVAAARQLAPEQITKLIDESTDQATPNFMGESVVNVLKLNLALDALK</sequence>
<accession>A8GB60</accession>
<gene>
    <name evidence="1" type="primary">kdpC</name>
    <name type="ordered locus">Spro_1246</name>
</gene>
<organism>
    <name type="scientific">Serratia proteamaculans (strain 568)</name>
    <dbReference type="NCBI Taxonomy" id="399741"/>
    <lineage>
        <taxon>Bacteria</taxon>
        <taxon>Pseudomonadati</taxon>
        <taxon>Pseudomonadota</taxon>
        <taxon>Gammaproteobacteria</taxon>
        <taxon>Enterobacterales</taxon>
        <taxon>Yersiniaceae</taxon>
        <taxon>Serratia</taxon>
    </lineage>
</organism>
<evidence type="ECO:0000255" key="1">
    <source>
        <dbReference type="HAMAP-Rule" id="MF_00276"/>
    </source>
</evidence>
<comment type="function">
    <text evidence="1">Part of the high-affinity ATP-driven potassium transport (or Kdp) system, which catalyzes the hydrolysis of ATP coupled with the electrogenic transport of potassium into the cytoplasm. This subunit acts as a catalytic chaperone that increases the ATP-binding affinity of the ATP-hydrolyzing subunit KdpB by the formation of a transient KdpB/KdpC/ATP ternary complex.</text>
</comment>
<comment type="subunit">
    <text evidence="1">The system is composed of three essential subunits: KdpA, KdpB and KdpC.</text>
</comment>
<comment type="subcellular location">
    <subcellularLocation>
        <location evidence="1">Cell inner membrane</location>
        <topology evidence="1">Single-pass membrane protein</topology>
    </subcellularLocation>
</comment>
<comment type="similarity">
    <text evidence="1">Belongs to the KdpC family.</text>
</comment>